<protein>
    <recommendedName>
        <fullName evidence="1">Large ribosomal subunit protein bL31</fullName>
    </recommendedName>
    <alternativeName>
        <fullName evidence="2">50S ribosomal protein L31</fullName>
    </alternativeName>
</protein>
<organism>
    <name type="scientific">Vibrio vulnificus (strain YJ016)</name>
    <dbReference type="NCBI Taxonomy" id="196600"/>
    <lineage>
        <taxon>Bacteria</taxon>
        <taxon>Pseudomonadati</taxon>
        <taxon>Pseudomonadota</taxon>
        <taxon>Gammaproteobacteria</taxon>
        <taxon>Vibrionales</taxon>
        <taxon>Vibrionaceae</taxon>
        <taxon>Vibrio</taxon>
    </lineage>
</organism>
<feature type="chain" id="PRO_0000173180" description="Large ribosomal subunit protein bL31">
    <location>
        <begin position="1"/>
        <end position="73"/>
    </location>
</feature>
<feature type="binding site" evidence="1">
    <location>
        <position position="16"/>
    </location>
    <ligand>
        <name>Zn(2+)</name>
        <dbReference type="ChEBI" id="CHEBI:29105"/>
    </ligand>
</feature>
<feature type="binding site" evidence="1">
    <location>
        <position position="18"/>
    </location>
    <ligand>
        <name>Zn(2+)</name>
        <dbReference type="ChEBI" id="CHEBI:29105"/>
    </ligand>
</feature>
<feature type="binding site" evidence="1">
    <location>
        <position position="38"/>
    </location>
    <ligand>
        <name>Zn(2+)</name>
        <dbReference type="ChEBI" id="CHEBI:29105"/>
    </ligand>
</feature>
<feature type="binding site" evidence="1">
    <location>
        <position position="41"/>
    </location>
    <ligand>
        <name>Zn(2+)</name>
        <dbReference type="ChEBI" id="CHEBI:29105"/>
    </ligand>
</feature>
<gene>
    <name evidence="1" type="primary">rpmE</name>
    <name type="ordered locus">VV3011</name>
</gene>
<accession>Q7MH61</accession>
<reference key="1">
    <citation type="journal article" date="2003" name="Genome Res.">
        <title>Comparative genome analysis of Vibrio vulnificus, a marine pathogen.</title>
        <authorList>
            <person name="Chen C.-Y."/>
            <person name="Wu K.-M."/>
            <person name="Chang Y.-C."/>
            <person name="Chang C.-H."/>
            <person name="Tsai H.-C."/>
            <person name="Liao T.-L."/>
            <person name="Liu Y.-M."/>
            <person name="Chen H.-J."/>
            <person name="Shen A.B.-T."/>
            <person name="Li J.-C."/>
            <person name="Su T.-L."/>
            <person name="Shao C.-P."/>
            <person name="Lee C.-T."/>
            <person name="Hor L.-I."/>
            <person name="Tsai S.-F."/>
        </authorList>
    </citation>
    <scope>NUCLEOTIDE SEQUENCE [LARGE SCALE GENOMIC DNA]</scope>
    <source>
        <strain>YJ016</strain>
    </source>
</reference>
<name>RL31_VIBVY</name>
<keyword id="KW-0479">Metal-binding</keyword>
<keyword id="KW-0687">Ribonucleoprotein</keyword>
<keyword id="KW-0689">Ribosomal protein</keyword>
<keyword id="KW-0694">RNA-binding</keyword>
<keyword id="KW-0699">rRNA-binding</keyword>
<keyword id="KW-0862">Zinc</keyword>
<evidence type="ECO:0000255" key="1">
    <source>
        <dbReference type="HAMAP-Rule" id="MF_00501"/>
    </source>
</evidence>
<evidence type="ECO:0000305" key="2"/>
<dbReference type="EMBL" id="BA000037">
    <property type="protein sequence ID" value="BAC95775.1"/>
    <property type="molecule type" value="Genomic_DNA"/>
</dbReference>
<dbReference type="RefSeq" id="WP_011151292.1">
    <property type="nucleotide sequence ID" value="NC_005139.1"/>
</dbReference>
<dbReference type="SMR" id="Q7MH61"/>
<dbReference type="STRING" id="672.VV93_v1c27390"/>
<dbReference type="KEGG" id="vvy:VV3011"/>
<dbReference type="eggNOG" id="COG0254">
    <property type="taxonomic scope" value="Bacteria"/>
</dbReference>
<dbReference type="HOGENOM" id="CLU_114306_4_3_6"/>
<dbReference type="Proteomes" id="UP000002675">
    <property type="component" value="Chromosome I"/>
</dbReference>
<dbReference type="GO" id="GO:1990904">
    <property type="term" value="C:ribonucleoprotein complex"/>
    <property type="evidence" value="ECO:0007669"/>
    <property type="project" value="UniProtKB-KW"/>
</dbReference>
<dbReference type="GO" id="GO:0005840">
    <property type="term" value="C:ribosome"/>
    <property type="evidence" value="ECO:0007669"/>
    <property type="project" value="UniProtKB-KW"/>
</dbReference>
<dbReference type="GO" id="GO:0046872">
    <property type="term" value="F:metal ion binding"/>
    <property type="evidence" value="ECO:0007669"/>
    <property type="project" value="UniProtKB-KW"/>
</dbReference>
<dbReference type="GO" id="GO:0019843">
    <property type="term" value="F:rRNA binding"/>
    <property type="evidence" value="ECO:0007669"/>
    <property type="project" value="UniProtKB-KW"/>
</dbReference>
<dbReference type="GO" id="GO:0003735">
    <property type="term" value="F:structural constituent of ribosome"/>
    <property type="evidence" value="ECO:0007669"/>
    <property type="project" value="InterPro"/>
</dbReference>
<dbReference type="GO" id="GO:0006412">
    <property type="term" value="P:translation"/>
    <property type="evidence" value="ECO:0007669"/>
    <property type="project" value="UniProtKB-UniRule"/>
</dbReference>
<dbReference type="Gene3D" id="4.10.830.30">
    <property type="entry name" value="Ribosomal protein L31"/>
    <property type="match status" value="1"/>
</dbReference>
<dbReference type="HAMAP" id="MF_00501">
    <property type="entry name" value="Ribosomal_bL31_1"/>
    <property type="match status" value="1"/>
</dbReference>
<dbReference type="InterPro" id="IPR034704">
    <property type="entry name" value="Ribosomal_bL28/bL31-like_sf"/>
</dbReference>
<dbReference type="InterPro" id="IPR002150">
    <property type="entry name" value="Ribosomal_bL31"/>
</dbReference>
<dbReference type="InterPro" id="IPR027491">
    <property type="entry name" value="Ribosomal_bL31_A"/>
</dbReference>
<dbReference type="InterPro" id="IPR042105">
    <property type="entry name" value="Ribosomal_bL31_sf"/>
</dbReference>
<dbReference type="NCBIfam" id="TIGR00105">
    <property type="entry name" value="L31"/>
    <property type="match status" value="1"/>
</dbReference>
<dbReference type="NCBIfam" id="NF000612">
    <property type="entry name" value="PRK00019.1"/>
    <property type="match status" value="1"/>
</dbReference>
<dbReference type="NCBIfam" id="NF001809">
    <property type="entry name" value="PRK00528.1"/>
    <property type="match status" value="1"/>
</dbReference>
<dbReference type="PANTHER" id="PTHR33280">
    <property type="entry name" value="50S RIBOSOMAL PROTEIN L31, CHLOROPLASTIC"/>
    <property type="match status" value="1"/>
</dbReference>
<dbReference type="PANTHER" id="PTHR33280:SF6">
    <property type="entry name" value="LARGE RIBOSOMAL SUBUNIT PROTEIN BL31A"/>
    <property type="match status" value="1"/>
</dbReference>
<dbReference type="Pfam" id="PF01197">
    <property type="entry name" value="Ribosomal_L31"/>
    <property type="match status" value="1"/>
</dbReference>
<dbReference type="PRINTS" id="PR01249">
    <property type="entry name" value="RIBOSOMALL31"/>
</dbReference>
<dbReference type="SUPFAM" id="SSF143800">
    <property type="entry name" value="L28p-like"/>
    <property type="match status" value="1"/>
</dbReference>
<dbReference type="PROSITE" id="PS01143">
    <property type="entry name" value="RIBOSOMAL_L31"/>
    <property type="match status" value="1"/>
</dbReference>
<comment type="function">
    <text evidence="1">Binds the 23S rRNA.</text>
</comment>
<comment type="cofactor">
    <cofactor evidence="1">
        <name>Zn(2+)</name>
        <dbReference type="ChEBI" id="CHEBI:29105"/>
    </cofactor>
    <text evidence="1">Binds 1 zinc ion per subunit.</text>
</comment>
<comment type="subunit">
    <text evidence="1">Part of the 50S ribosomal subunit.</text>
</comment>
<comment type="similarity">
    <text evidence="1">Belongs to the bacterial ribosomal protein bL31 family. Type A subfamily.</text>
</comment>
<sequence>MKAGIHPEYKAVNATCSCGNSFVFNSTLDKDSIHLDVCDKCHPFYTGKQRIVDTGGRVDRFNKRFGALSSGKK</sequence>
<proteinExistence type="inferred from homology"/>